<gene>
    <name evidence="1" type="primary">grpE</name>
    <name type="ordered locus">TT_C1126</name>
</gene>
<sequence length="177" mass="19999">MEERNHENTLEKDLEAVGQEAQALEERLKAAEEELKGLKDKYLRLLADFDNYRKRMEEELKAREREGVLKALRALLPVLDDLDRALEFAEASPESIRQGVRAIRDGFFRILAGLGVEEVPGEGEAFDPRYHEAVGLLPGEPGKVAKVFQRGFRMGEALVRPARVAVGEEKQEEADLE</sequence>
<evidence type="ECO:0000255" key="1">
    <source>
        <dbReference type="HAMAP-Rule" id="MF_01151"/>
    </source>
</evidence>
<organism>
    <name type="scientific">Thermus thermophilus (strain ATCC BAA-163 / DSM 7039 / HB27)</name>
    <dbReference type="NCBI Taxonomy" id="262724"/>
    <lineage>
        <taxon>Bacteria</taxon>
        <taxon>Thermotogati</taxon>
        <taxon>Deinococcota</taxon>
        <taxon>Deinococci</taxon>
        <taxon>Thermales</taxon>
        <taxon>Thermaceae</taxon>
        <taxon>Thermus</taxon>
    </lineage>
</organism>
<proteinExistence type="inferred from homology"/>
<keyword id="KW-0143">Chaperone</keyword>
<keyword id="KW-0963">Cytoplasm</keyword>
<keyword id="KW-0346">Stress response</keyword>
<accession>Q72IK6</accession>
<name>GRPE_THET2</name>
<comment type="function">
    <text evidence="1">Participates actively in the response to hyperosmotic and heat shock by preventing the aggregation of stress-denatured proteins, in association with DnaK and GrpE. It is the nucleotide exchange factor for DnaK and may function as a thermosensor. Unfolded proteins bind initially to DnaJ; upon interaction with the DnaJ-bound protein, DnaK hydrolyzes its bound ATP, resulting in the formation of a stable complex. GrpE releases ADP from DnaK; ATP binding to DnaK triggers the release of the substrate protein, thus completing the reaction cycle. Several rounds of ATP-dependent interactions between DnaJ, DnaK and GrpE are required for fully efficient folding.</text>
</comment>
<comment type="subunit">
    <text evidence="1">Homodimer.</text>
</comment>
<comment type="subcellular location">
    <subcellularLocation>
        <location evidence="1">Cytoplasm</location>
    </subcellularLocation>
</comment>
<comment type="similarity">
    <text evidence="1">Belongs to the GrpE family.</text>
</comment>
<feature type="chain" id="PRO_0000113883" description="Protein GrpE">
    <location>
        <begin position="1"/>
        <end position="177"/>
    </location>
</feature>
<reference key="1">
    <citation type="journal article" date="2004" name="Nat. Biotechnol.">
        <title>The genome sequence of the extreme thermophile Thermus thermophilus.</title>
        <authorList>
            <person name="Henne A."/>
            <person name="Brueggemann H."/>
            <person name="Raasch C."/>
            <person name="Wiezer A."/>
            <person name="Hartsch T."/>
            <person name="Liesegang H."/>
            <person name="Johann A."/>
            <person name="Lienard T."/>
            <person name="Gohl O."/>
            <person name="Martinez-Arias R."/>
            <person name="Jacobi C."/>
            <person name="Starkuviene V."/>
            <person name="Schlenczeck S."/>
            <person name="Dencker S."/>
            <person name="Huber R."/>
            <person name="Klenk H.-P."/>
            <person name="Kramer W."/>
            <person name="Merkl R."/>
            <person name="Gottschalk G."/>
            <person name="Fritz H.-J."/>
        </authorList>
    </citation>
    <scope>NUCLEOTIDE SEQUENCE [LARGE SCALE GENOMIC DNA]</scope>
    <source>
        <strain>ATCC BAA-163 / DSM 7039 / HB27</strain>
    </source>
</reference>
<protein>
    <recommendedName>
        <fullName evidence="1">Protein GrpE</fullName>
    </recommendedName>
    <alternativeName>
        <fullName evidence="1">HSP-70 cofactor</fullName>
    </alternativeName>
</protein>
<dbReference type="EMBL" id="AE017221">
    <property type="protein sequence ID" value="AAS81468.1"/>
    <property type="molecule type" value="Genomic_DNA"/>
</dbReference>
<dbReference type="RefSeq" id="WP_011173540.1">
    <property type="nucleotide sequence ID" value="NC_005835.1"/>
</dbReference>
<dbReference type="SMR" id="Q72IK6"/>
<dbReference type="KEGG" id="tth:TT_C1126"/>
<dbReference type="eggNOG" id="COG0576">
    <property type="taxonomic scope" value="Bacteria"/>
</dbReference>
<dbReference type="HOGENOM" id="CLU_057217_6_3_0"/>
<dbReference type="OrthoDB" id="9812586at2"/>
<dbReference type="Proteomes" id="UP000000592">
    <property type="component" value="Chromosome"/>
</dbReference>
<dbReference type="GO" id="GO:0005737">
    <property type="term" value="C:cytoplasm"/>
    <property type="evidence" value="ECO:0007669"/>
    <property type="project" value="UniProtKB-SubCell"/>
</dbReference>
<dbReference type="GO" id="GO:0000774">
    <property type="term" value="F:adenyl-nucleotide exchange factor activity"/>
    <property type="evidence" value="ECO:0007669"/>
    <property type="project" value="InterPro"/>
</dbReference>
<dbReference type="GO" id="GO:0042803">
    <property type="term" value="F:protein homodimerization activity"/>
    <property type="evidence" value="ECO:0007669"/>
    <property type="project" value="InterPro"/>
</dbReference>
<dbReference type="GO" id="GO:0051087">
    <property type="term" value="F:protein-folding chaperone binding"/>
    <property type="evidence" value="ECO:0007669"/>
    <property type="project" value="InterPro"/>
</dbReference>
<dbReference type="GO" id="GO:0051082">
    <property type="term" value="F:unfolded protein binding"/>
    <property type="evidence" value="ECO:0007669"/>
    <property type="project" value="TreeGrafter"/>
</dbReference>
<dbReference type="GO" id="GO:0006457">
    <property type="term" value="P:protein folding"/>
    <property type="evidence" value="ECO:0007669"/>
    <property type="project" value="InterPro"/>
</dbReference>
<dbReference type="CDD" id="cd00446">
    <property type="entry name" value="GrpE"/>
    <property type="match status" value="1"/>
</dbReference>
<dbReference type="Gene3D" id="3.90.20.20">
    <property type="match status" value="1"/>
</dbReference>
<dbReference type="Gene3D" id="2.30.22.10">
    <property type="entry name" value="Head domain of nucleotide exchange factor GrpE"/>
    <property type="match status" value="1"/>
</dbReference>
<dbReference type="HAMAP" id="MF_01151">
    <property type="entry name" value="GrpE"/>
    <property type="match status" value="1"/>
</dbReference>
<dbReference type="InterPro" id="IPR000740">
    <property type="entry name" value="GrpE"/>
</dbReference>
<dbReference type="InterPro" id="IPR013805">
    <property type="entry name" value="GrpE_coiled_coil"/>
</dbReference>
<dbReference type="InterPro" id="IPR009012">
    <property type="entry name" value="GrpE_head"/>
</dbReference>
<dbReference type="PANTHER" id="PTHR21237">
    <property type="entry name" value="GRPE PROTEIN"/>
    <property type="match status" value="1"/>
</dbReference>
<dbReference type="PANTHER" id="PTHR21237:SF23">
    <property type="entry name" value="GRPE PROTEIN HOMOLOG, MITOCHONDRIAL"/>
    <property type="match status" value="1"/>
</dbReference>
<dbReference type="Pfam" id="PF01025">
    <property type="entry name" value="GrpE"/>
    <property type="match status" value="1"/>
</dbReference>
<dbReference type="PRINTS" id="PR00773">
    <property type="entry name" value="GRPEPROTEIN"/>
</dbReference>
<dbReference type="SUPFAM" id="SSF58014">
    <property type="entry name" value="Coiled-coil domain of nucleotide exchange factor GrpE"/>
    <property type="match status" value="1"/>
</dbReference>
<dbReference type="SUPFAM" id="SSF51064">
    <property type="entry name" value="Head domain of nucleotide exchange factor GrpE"/>
    <property type="match status" value="1"/>
</dbReference>
<dbReference type="PROSITE" id="PS01071">
    <property type="entry name" value="GRPE"/>
    <property type="match status" value="1"/>
</dbReference>